<protein>
    <recommendedName>
        <fullName>Transketolase, chromosomal</fullName>
        <shortName>TK</shortName>
        <ecNumber>2.2.1.1</ecNumber>
    </recommendedName>
</protein>
<keyword id="KW-0106">Calcium</keyword>
<keyword id="KW-0113">Calvin cycle</keyword>
<keyword id="KW-0460">Magnesium</keyword>
<keyword id="KW-0479">Metal-binding</keyword>
<keyword id="KW-1185">Reference proteome</keyword>
<keyword id="KW-0786">Thiamine pyrophosphate</keyword>
<keyword id="KW-0808">Transferase</keyword>
<proteinExistence type="inferred from homology"/>
<reference key="1">
    <citation type="journal article" date="1993" name="J. Bacteriol.">
        <title>The cbb operons of the facultative chemoautotroph Alcaligenes eutrophus encode phosphoglycolate phosphatase.</title>
        <authorList>
            <person name="Schaeferjohann J."/>
            <person name="Yoo J.-G."/>
            <person name="Kusian B."/>
            <person name="Bowien B."/>
        </authorList>
    </citation>
    <scope>NUCLEOTIDE SEQUENCE [GENOMIC DNA]</scope>
</reference>
<reference key="2">
    <citation type="journal article" date="2006" name="Nat. Biotechnol.">
        <title>Genome sequence of the bioplastic-producing 'Knallgas' bacterium Ralstonia eutropha H16.</title>
        <authorList>
            <person name="Pohlmann A."/>
            <person name="Fricke W.F."/>
            <person name="Reinecke F."/>
            <person name="Kusian B."/>
            <person name="Liesegang H."/>
            <person name="Cramm R."/>
            <person name="Eitinger T."/>
            <person name="Ewering C."/>
            <person name="Poetter M."/>
            <person name="Schwartz E."/>
            <person name="Strittmatter A."/>
            <person name="Voss I."/>
            <person name="Gottschalk G."/>
            <person name="Steinbuechel A."/>
            <person name="Friedrich B."/>
            <person name="Bowien B."/>
        </authorList>
    </citation>
    <scope>NUCLEOTIDE SEQUENCE [LARGE SCALE GENOMIC DNA]</scope>
    <source>
        <strain>ATCC 17699 / DSM 428 / KCTC 22496 / NCIMB 10442 / H16 / Stanier 337</strain>
    </source>
</reference>
<reference key="3">
    <citation type="journal article" date="1989" name="Gene">
        <title>Sequence analysis of the chromosomal and plasmid genes encoding phosphoribulokinase from Alcaligenes eutrophus.</title>
        <authorList>
            <person name="Kossmann J."/>
            <person name="Klintworth R."/>
            <person name="Bowien B."/>
        </authorList>
    </citation>
    <scope>NUCLEOTIDE SEQUENCE [GENOMIC DNA] OF 1-77</scope>
</reference>
<gene>
    <name type="primary">cbbTC</name>
    <name type="synonym">cbbT2</name>
    <name type="ordered locus">H16_B1388</name>
</gene>
<feature type="chain" id="PRO_0000191891" description="Transketolase, chromosomal">
    <location>
        <begin position="1"/>
        <end position="670"/>
    </location>
</feature>
<feature type="active site" description="Proton donor" evidence="1">
    <location>
        <position position="417"/>
    </location>
</feature>
<feature type="binding site" evidence="1">
    <location>
        <position position="32"/>
    </location>
    <ligand>
        <name>substrate</name>
    </ligand>
</feature>
<feature type="binding site" evidence="1">
    <location>
        <position position="72"/>
    </location>
    <ligand>
        <name>thiamine diphosphate</name>
        <dbReference type="ChEBI" id="CHEBI:58937"/>
    </ligand>
</feature>
<feature type="binding site" evidence="1">
    <location>
        <begin position="120"/>
        <end position="122"/>
    </location>
    <ligand>
        <name>thiamine diphosphate</name>
        <dbReference type="ChEBI" id="CHEBI:58937"/>
    </ligand>
</feature>
<feature type="binding site" evidence="1">
    <location>
        <position position="161"/>
    </location>
    <ligand>
        <name>Mg(2+)</name>
        <dbReference type="ChEBI" id="CHEBI:18420"/>
    </ligand>
</feature>
<feature type="binding site" evidence="1">
    <location>
        <position position="162"/>
    </location>
    <ligand>
        <name>thiamine diphosphate</name>
        <dbReference type="ChEBI" id="CHEBI:58937"/>
    </ligand>
</feature>
<feature type="binding site" evidence="1">
    <location>
        <position position="191"/>
    </location>
    <ligand>
        <name>Mg(2+)</name>
        <dbReference type="ChEBI" id="CHEBI:18420"/>
    </ligand>
</feature>
<feature type="binding site" evidence="1">
    <location>
        <position position="191"/>
    </location>
    <ligand>
        <name>thiamine diphosphate</name>
        <dbReference type="ChEBI" id="CHEBI:58937"/>
    </ligand>
</feature>
<feature type="binding site" evidence="1">
    <location>
        <position position="193"/>
    </location>
    <ligand>
        <name>Mg(2+)</name>
        <dbReference type="ChEBI" id="CHEBI:18420"/>
    </ligand>
</feature>
<feature type="binding site" evidence="1">
    <location>
        <position position="267"/>
    </location>
    <ligand>
        <name>substrate</name>
    </ligand>
</feature>
<feature type="binding site" evidence="1">
    <location>
        <position position="267"/>
    </location>
    <ligand>
        <name>thiamine diphosphate</name>
        <dbReference type="ChEBI" id="CHEBI:58937"/>
    </ligand>
</feature>
<feature type="binding site" evidence="1">
    <location>
        <position position="364"/>
    </location>
    <ligand>
        <name>substrate</name>
    </ligand>
</feature>
<feature type="binding site" evidence="1">
    <location>
        <position position="391"/>
    </location>
    <ligand>
        <name>substrate</name>
    </ligand>
</feature>
<feature type="binding site" evidence="1">
    <location>
        <position position="443"/>
    </location>
    <ligand>
        <name>thiamine diphosphate</name>
        <dbReference type="ChEBI" id="CHEBI:58937"/>
    </ligand>
</feature>
<feature type="binding site" evidence="1">
    <location>
        <position position="467"/>
    </location>
    <ligand>
        <name>substrate</name>
    </ligand>
</feature>
<feature type="binding site" evidence="1">
    <location>
        <position position="475"/>
    </location>
    <ligand>
        <name>substrate</name>
    </ligand>
</feature>
<feature type="binding site" evidence="1">
    <location>
        <position position="526"/>
    </location>
    <ligand>
        <name>substrate</name>
    </ligand>
</feature>
<feature type="site" description="Important for catalytic activity" evidence="1">
    <location>
        <position position="32"/>
    </location>
</feature>
<feature type="site" description="Important for catalytic activity" evidence="1">
    <location>
        <position position="267"/>
    </location>
</feature>
<organism>
    <name type="scientific">Cupriavidus necator (strain ATCC 17699 / DSM 428 / KCTC 22496 / NCIMB 10442 / H16 / Stanier 337)</name>
    <name type="common">Ralstonia eutropha</name>
    <dbReference type="NCBI Taxonomy" id="381666"/>
    <lineage>
        <taxon>Bacteria</taxon>
        <taxon>Pseudomonadati</taxon>
        <taxon>Pseudomonadota</taxon>
        <taxon>Betaproteobacteria</taxon>
        <taxon>Burkholderiales</taxon>
        <taxon>Burkholderiaceae</taxon>
        <taxon>Cupriavidus</taxon>
    </lineage>
</organism>
<sequence>MNAPERIDSAARCANALRFLAADAVEQAKSGHPGAPMGMAEMAEVLWRRHLRHNPANPAWPDRDRFVLSNGHASMLQYALLHLTGYDLPMSQLRQFRQLHAATPGHPELGVTPGVETTTGPLGQGLANAVGMALAEKLLAATFNRPGFDIVDHHTYVFLGDGCLMEGLSHEACSLAGTLRLGKLICLYDDNGISIDGEVAGWFADDTPKRFAAYGWHVIADVDGHDAHALDAALHEAKAERDRPTLICCRTVIGKGAPAKAGGHDVHGAPLGAPEIAAMRTALGWEAEPFTVPADVADAWDARAQGAAREAEWEARFVSYCAAHPELAEEFVRRANGRLPEGFDAELMALLDAPSPLQGKIATRKASQLCLEALTPALPELLGGSADLTGSNLTNVKASVWVNHAGHGNYVSYGVREFGMAAAMNGIALHGGLIPYGGTFMTFSDYSRNAIRMAALMRLRVVHVLTHDSIGLGEDGPTHQPVEHAASLRLIPNNQVWRPCDGAETAYAWLAALRREDGPSCLVLSRQALMPFERNPAQRAEIARGGYVLRDVPAPRVVLIATGSEVEIAMRAALDLADAGIAARVVSMPCVELFYAQDVAYRDTVLPPGLPRVSVEAGGTWFWRGVVGEQGLALGIDTFGESAPAEALYQHFGLTPAHVAAAARVLLEEA</sequence>
<dbReference type="EC" id="2.2.1.1"/>
<dbReference type="EMBL" id="M68904">
    <property type="protein sequence ID" value="AAA20196.1"/>
    <property type="molecule type" value="Unassigned_DNA"/>
</dbReference>
<dbReference type="EMBL" id="AM260480">
    <property type="protein sequence ID" value="CAJ96177.1"/>
    <property type="molecule type" value="Genomic_DNA"/>
</dbReference>
<dbReference type="EMBL" id="M33563">
    <property type="status" value="NOT_ANNOTATED_CDS"/>
    <property type="molecule type" value="Genomic_DNA"/>
</dbReference>
<dbReference type="PIR" id="A49934">
    <property type="entry name" value="A49934"/>
</dbReference>
<dbReference type="SMR" id="P21725"/>
<dbReference type="STRING" id="381666.H16_B1388"/>
<dbReference type="KEGG" id="reh:H16_B1388"/>
<dbReference type="eggNOG" id="COG0021">
    <property type="taxonomic scope" value="Bacteria"/>
</dbReference>
<dbReference type="HOGENOM" id="CLU_009227_0_0_4"/>
<dbReference type="OrthoDB" id="8732661at2"/>
<dbReference type="UniPathway" id="UPA00116"/>
<dbReference type="Proteomes" id="UP000008210">
    <property type="component" value="Chromosome 2"/>
</dbReference>
<dbReference type="GO" id="GO:0005829">
    <property type="term" value="C:cytosol"/>
    <property type="evidence" value="ECO:0007669"/>
    <property type="project" value="TreeGrafter"/>
</dbReference>
<dbReference type="GO" id="GO:0046872">
    <property type="term" value="F:metal ion binding"/>
    <property type="evidence" value="ECO:0007669"/>
    <property type="project" value="UniProtKB-KW"/>
</dbReference>
<dbReference type="GO" id="GO:0004802">
    <property type="term" value="F:transketolase activity"/>
    <property type="evidence" value="ECO:0007669"/>
    <property type="project" value="UniProtKB-EC"/>
</dbReference>
<dbReference type="GO" id="GO:0006098">
    <property type="term" value="P:pentose-phosphate shunt"/>
    <property type="evidence" value="ECO:0007669"/>
    <property type="project" value="TreeGrafter"/>
</dbReference>
<dbReference type="GO" id="GO:0019253">
    <property type="term" value="P:reductive pentose-phosphate cycle"/>
    <property type="evidence" value="ECO:0007669"/>
    <property type="project" value="UniProtKB-UniPathway"/>
</dbReference>
<dbReference type="CDD" id="cd07033">
    <property type="entry name" value="TPP_PYR_DXS_TK_like"/>
    <property type="match status" value="1"/>
</dbReference>
<dbReference type="CDD" id="cd02012">
    <property type="entry name" value="TPP_TK"/>
    <property type="match status" value="1"/>
</dbReference>
<dbReference type="FunFam" id="3.40.50.920:FF:000003">
    <property type="entry name" value="Transketolase"/>
    <property type="match status" value="1"/>
</dbReference>
<dbReference type="FunFam" id="3.40.50.970:FF:000003">
    <property type="entry name" value="Transketolase"/>
    <property type="match status" value="1"/>
</dbReference>
<dbReference type="FunFam" id="3.40.50.970:FF:000004">
    <property type="entry name" value="Transketolase"/>
    <property type="match status" value="1"/>
</dbReference>
<dbReference type="Gene3D" id="3.40.50.920">
    <property type="match status" value="1"/>
</dbReference>
<dbReference type="Gene3D" id="3.40.50.970">
    <property type="match status" value="2"/>
</dbReference>
<dbReference type="InterPro" id="IPR029061">
    <property type="entry name" value="THDP-binding"/>
</dbReference>
<dbReference type="InterPro" id="IPR009014">
    <property type="entry name" value="Transketo_C/PFOR_II"/>
</dbReference>
<dbReference type="InterPro" id="IPR055152">
    <property type="entry name" value="Transketolase-like_C_2"/>
</dbReference>
<dbReference type="InterPro" id="IPR005475">
    <property type="entry name" value="Transketolase-like_Pyr-bd"/>
</dbReference>
<dbReference type="InterPro" id="IPR005478">
    <property type="entry name" value="Transketolase_bac-like"/>
</dbReference>
<dbReference type="InterPro" id="IPR020826">
    <property type="entry name" value="Transketolase_BS"/>
</dbReference>
<dbReference type="InterPro" id="IPR049557">
    <property type="entry name" value="Transketolase_CS"/>
</dbReference>
<dbReference type="InterPro" id="IPR033247">
    <property type="entry name" value="Transketolase_fam"/>
</dbReference>
<dbReference type="InterPro" id="IPR005474">
    <property type="entry name" value="Transketolase_N"/>
</dbReference>
<dbReference type="NCBIfam" id="TIGR00232">
    <property type="entry name" value="tktlase_bact"/>
    <property type="match status" value="1"/>
</dbReference>
<dbReference type="PANTHER" id="PTHR43522">
    <property type="entry name" value="TRANSKETOLASE"/>
    <property type="match status" value="1"/>
</dbReference>
<dbReference type="PANTHER" id="PTHR43522:SF2">
    <property type="entry name" value="TRANSKETOLASE 1-RELATED"/>
    <property type="match status" value="1"/>
</dbReference>
<dbReference type="Pfam" id="PF02779">
    <property type="entry name" value="Transket_pyr"/>
    <property type="match status" value="1"/>
</dbReference>
<dbReference type="Pfam" id="PF22613">
    <property type="entry name" value="Transketolase_C_1"/>
    <property type="match status" value="1"/>
</dbReference>
<dbReference type="Pfam" id="PF00456">
    <property type="entry name" value="Transketolase_N"/>
    <property type="match status" value="1"/>
</dbReference>
<dbReference type="SMART" id="SM00861">
    <property type="entry name" value="Transket_pyr"/>
    <property type="match status" value="1"/>
</dbReference>
<dbReference type="SUPFAM" id="SSF52518">
    <property type="entry name" value="Thiamin diphosphate-binding fold (THDP-binding)"/>
    <property type="match status" value="2"/>
</dbReference>
<dbReference type="SUPFAM" id="SSF52922">
    <property type="entry name" value="TK C-terminal domain-like"/>
    <property type="match status" value="1"/>
</dbReference>
<dbReference type="PROSITE" id="PS00801">
    <property type="entry name" value="TRANSKETOLASE_1"/>
    <property type="match status" value="1"/>
</dbReference>
<dbReference type="PROSITE" id="PS00802">
    <property type="entry name" value="TRANSKETOLASE_2"/>
    <property type="match status" value="1"/>
</dbReference>
<accession>P21725</accession>
<accession>Q0K1E7</accession>
<comment type="function">
    <text evidence="1">Catalyzes the transfer of a two-carbon ketol group from a ketose donor to an aldose acceptor, via a covalent intermediate with the cofactor thiamine pyrophosphate.</text>
</comment>
<comment type="catalytic activity">
    <reaction>
        <text>D-sedoheptulose 7-phosphate + D-glyceraldehyde 3-phosphate = aldehydo-D-ribose 5-phosphate + D-xylulose 5-phosphate</text>
        <dbReference type="Rhea" id="RHEA:10508"/>
        <dbReference type="ChEBI" id="CHEBI:57483"/>
        <dbReference type="ChEBI" id="CHEBI:57737"/>
        <dbReference type="ChEBI" id="CHEBI:58273"/>
        <dbReference type="ChEBI" id="CHEBI:59776"/>
        <dbReference type="EC" id="2.2.1.1"/>
    </reaction>
</comment>
<comment type="cofactor">
    <cofactor evidence="1">
        <name>Mg(2+)</name>
        <dbReference type="ChEBI" id="CHEBI:18420"/>
    </cofactor>
    <cofactor evidence="1">
        <name>Ca(2+)</name>
        <dbReference type="ChEBI" id="CHEBI:29108"/>
    </cofactor>
    <cofactor evidence="1">
        <name>Mn(2+)</name>
        <dbReference type="ChEBI" id="CHEBI:29035"/>
    </cofactor>
    <cofactor evidence="1">
        <name>Co(2+)</name>
        <dbReference type="ChEBI" id="CHEBI:48828"/>
    </cofactor>
    <text evidence="1">Binds 1 Mg(2+) ion per subunit. Can also utilize other divalent metal cations, such as Ca(2+), Mn(2+) and Co(2+).</text>
</comment>
<comment type="cofactor">
    <cofactor evidence="1">
        <name>thiamine diphosphate</name>
        <dbReference type="ChEBI" id="CHEBI:58937"/>
    </cofactor>
    <text evidence="1">Binds 1 thiamine pyrophosphate per subunit.</text>
</comment>
<comment type="pathway">
    <text>Carbohydrate biosynthesis; Calvin cycle.</text>
</comment>
<comment type="subunit">
    <text evidence="1">Homodimer.</text>
</comment>
<comment type="similarity">
    <text evidence="2">Belongs to the transketolase family.</text>
</comment>
<name>TKTC_CUPNH</name>
<evidence type="ECO:0000250" key="1"/>
<evidence type="ECO:0000305" key="2"/>